<name>HYUC_PAEAU</name>
<sequence>MTLQKAQAERIEKEIRELSRFSAEGPGVTRLTYTPEHAAARETLIAAMKAAALSVREDALGNIIGRREGTDPELPAIAVGSHFDSVRNGGMFDGTAGVVCALEAARVMLENGYVNRHPFEFIAIVEEEGARFSSGMLGGRAIAGLVADRELDSLVDEDGVSVRQAATAFGLKPGELQAAARSAADLRAFIELHIEQGPILEQEQIEIGVVTSIVGVRALRVAVKGRSDHAGTTPMHLRQDALVPAALMVREVNRFVNEIADGTVATVGHLTVAPGGGNQVPGEVDFTLDLRSPHEESLRVLIDRISVMVGEVASQAGVAADVDEFFNLSPVQLAPTMVDAVREAASALQFTHRDISSGAGHDSMFIAQVTDVGMVFVPSRAGRSHVPEEWTDFDDLRKGTEVVLRVMKALDR</sequence>
<comment type="function">
    <text evidence="3">Catalyzes the hydrolysis of aliphatic N-carbamoyl-L-alpha-amino acids to free L-alpha-amino acids. Is strictly L-specific since it is inactive toward N-carbamoyl-D-alpha-amino acids. Shows a preference for aromatic N-carbamoyl-L-alpha-amino acids, such as N-carbamoyl-L-tryptophan and N-carbamoyl-L-tyrosine and, to a lesser extent, N-carbamoyl-L-phenylalanine and the non-natural amino acid N-carbamoyl-L-thienylalanine. Carbamoyl derivatives of beta-alanine and charged aliphatic amino acids are not accepted as substrates.</text>
</comment>
<comment type="catalytic activity">
    <reaction evidence="3">
        <text>an N-carbamoyl-L-alpha-amino acid + H2O + 2 H(+) = an L-alpha-amino acid + NH4(+) + CO2</text>
        <dbReference type="Rhea" id="RHEA:17581"/>
        <dbReference type="ChEBI" id="CHEBI:15377"/>
        <dbReference type="ChEBI" id="CHEBI:15378"/>
        <dbReference type="ChEBI" id="CHEBI:16526"/>
        <dbReference type="ChEBI" id="CHEBI:28938"/>
        <dbReference type="ChEBI" id="CHEBI:58865"/>
        <dbReference type="ChEBI" id="CHEBI:59869"/>
        <dbReference type="EC" id="3.5.1.87"/>
    </reaction>
    <physiologicalReaction direction="left-to-right" evidence="7">
        <dbReference type="Rhea" id="RHEA:17582"/>
    </physiologicalReaction>
</comment>
<comment type="catalytic activity">
    <reaction evidence="3">
        <text>N-carbamoyl-L-tryptophan + H2O + 2 H(+) = L-tryptophan + NH4(+) + CO2</text>
        <dbReference type="Rhea" id="RHEA:72823"/>
        <dbReference type="ChEBI" id="CHEBI:15377"/>
        <dbReference type="ChEBI" id="CHEBI:15378"/>
        <dbReference type="ChEBI" id="CHEBI:16526"/>
        <dbReference type="ChEBI" id="CHEBI:28938"/>
        <dbReference type="ChEBI" id="CHEBI:57912"/>
        <dbReference type="ChEBI" id="CHEBI:192534"/>
    </reaction>
    <physiologicalReaction direction="left-to-right" evidence="7">
        <dbReference type="Rhea" id="RHEA:72824"/>
    </physiologicalReaction>
</comment>
<comment type="catalytic activity">
    <reaction evidence="3">
        <text>N-carbamoyl-L-tyrosine + H2O + 2 H(+) = L-tyrosine + NH4(+) + CO2</text>
        <dbReference type="Rhea" id="RHEA:84023"/>
        <dbReference type="ChEBI" id="CHEBI:15377"/>
        <dbReference type="ChEBI" id="CHEBI:15378"/>
        <dbReference type="ChEBI" id="CHEBI:16526"/>
        <dbReference type="ChEBI" id="CHEBI:28938"/>
        <dbReference type="ChEBI" id="CHEBI:58315"/>
        <dbReference type="ChEBI" id="CHEBI:233554"/>
    </reaction>
    <physiologicalReaction direction="left-to-right" evidence="7">
        <dbReference type="Rhea" id="RHEA:84024"/>
    </physiologicalReaction>
</comment>
<comment type="catalytic activity">
    <reaction evidence="3">
        <text>N-carbamoyl-L-phenylalanine + H2O + 2 H(+) = L-phenylalanine + NH4(+) + CO2</text>
        <dbReference type="Rhea" id="RHEA:83911"/>
        <dbReference type="ChEBI" id="CHEBI:15377"/>
        <dbReference type="ChEBI" id="CHEBI:15378"/>
        <dbReference type="ChEBI" id="CHEBI:16526"/>
        <dbReference type="ChEBI" id="CHEBI:28938"/>
        <dbReference type="ChEBI" id="CHEBI:58095"/>
        <dbReference type="ChEBI" id="CHEBI:192544"/>
    </reaction>
    <physiologicalReaction direction="left-to-right" evidence="7">
        <dbReference type="Rhea" id="RHEA:83912"/>
    </physiologicalReaction>
</comment>
<comment type="cofactor">
    <cofactor evidence="2">
        <name>Mn(2+)</name>
        <dbReference type="ChEBI" id="CHEBI:29035"/>
    </cofactor>
    <cofactor evidence="2">
        <name>Ni(2+)</name>
        <dbReference type="ChEBI" id="CHEBI:49786"/>
    </cofactor>
    <cofactor evidence="2">
        <name>Co(2+)</name>
        <dbReference type="ChEBI" id="CHEBI:48828"/>
    </cofactor>
    <cofactor evidence="2">
        <name>Fe(2+)</name>
        <dbReference type="ChEBI" id="CHEBI:29033"/>
    </cofactor>
    <text evidence="2">Requires divalent metal cations for activity. Binds 2 divalent metal cations per subunit.</text>
</comment>
<comment type="biophysicochemical properties">
    <kinetics>
        <text evidence="3">kcat is 5.1 sec(-1) with L-carbamoyl-L-tryptophan as substrate. kcat is 6.5 sec(-1) with N-carbamoyl-L-tyrosine as substrate. kcat is 5.0 sec(-1) with N-carbamoyl-D,L-phenylalanine as substrate. kcat is 16.1 sec(-1) with N-carbamoyl-L-thienyalanine as substrate.</text>
    </kinetics>
    <phDependence>
        <text evidence="3">Optimum pH is 8.5.</text>
    </phDependence>
    <temperatureDependence>
        <text evidence="3">Optimum temperature is 50 degrees Celsius.</text>
    </temperatureDependence>
</comment>
<comment type="subunit">
    <text evidence="3">Homodimer.</text>
</comment>
<comment type="biotechnology">
    <text evidence="4">Could be used as a biocatalyst for the industrial production of optically pure L-amino acids from racemic 5-substituted hydantoins.</text>
</comment>
<comment type="similarity">
    <text evidence="6">Belongs to the peptidase M20 family.</text>
</comment>
<reference key="1">
    <citation type="journal article" date="1999" name="J. Biotechnol.">
        <title>Cloning, nucleotide sequence and expression of a new L-N-carbamoylase gene from Arthrobacter aurescens DSM 3747 in E. coli.</title>
        <authorList>
            <person name="Wilms B."/>
            <person name="Wiese A."/>
            <person name="Syldatk C."/>
            <person name="Mattes R."/>
            <person name="Altenbuchner J."/>
            <person name="Pietzsch M."/>
        </authorList>
    </citation>
    <scope>NUCLEOTIDE SEQUENCE [GENOMIC DNA]</scope>
    <scope>FUNCTION</scope>
    <scope>CATALYTIC ACTIVITY</scope>
    <scope>SUBSTRATE SPECIFICITY</scope>
    <scope>BIOPHYSICOCHEMICAL PROPERTIES</scope>
    <scope>SUBUNIT</scope>
    <source>
        <strain>DSM 3747</strain>
    </source>
</reference>
<reference key="2">
    <citation type="journal article" date="2001" name="Enzyme Microb. Technol.">
        <title>Optimization of the immobilization parameters and operational stability of immobilized hydantoinase and L-N-carbamoylase from Arthrobacter aurescens for the production of optically pure l-amino acids.</title>
        <authorList>
            <person name="Ragnitz K."/>
            <person name="Syldatk C."/>
            <person name="Pietzsch M."/>
        </authorList>
    </citation>
    <scope>BIOTECHNOLOGY</scope>
    <source>
        <strain>DSM 3747</strain>
    </source>
</reference>
<dbReference type="EC" id="3.5.1.87" evidence="3"/>
<dbReference type="EMBL" id="AF146701">
    <property type="protein sequence ID" value="AAG02131.1"/>
    <property type="molecule type" value="Genomic_DNA"/>
</dbReference>
<dbReference type="SMR" id="Q9F464"/>
<dbReference type="GO" id="GO:0016813">
    <property type="term" value="F:hydrolase activity, acting on carbon-nitrogen (but not peptide) bonds, in linear amidines"/>
    <property type="evidence" value="ECO:0007669"/>
    <property type="project" value="InterPro"/>
</dbReference>
<dbReference type="GO" id="GO:0046872">
    <property type="term" value="F:metal ion binding"/>
    <property type="evidence" value="ECO:0007669"/>
    <property type="project" value="UniProtKB-KW"/>
</dbReference>
<dbReference type="GO" id="GO:0050538">
    <property type="term" value="F:N-carbamoyl-L-amino-acid hydrolase activity"/>
    <property type="evidence" value="ECO:0007669"/>
    <property type="project" value="UniProtKB-EC"/>
</dbReference>
<dbReference type="GO" id="GO:0008652">
    <property type="term" value="P:amino acid biosynthetic process"/>
    <property type="evidence" value="ECO:0007669"/>
    <property type="project" value="UniProtKB-KW"/>
</dbReference>
<dbReference type="CDD" id="cd03884">
    <property type="entry name" value="M20_bAS"/>
    <property type="match status" value="1"/>
</dbReference>
<dbReference type="Gene3D" id="3.30.70.360">
    <property type="match status" value="1"/>
</dbReference>
<dbReference type="Gene3D" id="3.40.630.10">
    <property type="entry name" value="Zn peptidases"/>
    <property type="match status" value="1"/>
</dbReference>
<dbReference type="InterPro" id="IPR010158">
    <property type="entry name" value="Amidase_Cbmase"/>
</dbReference>
<dbReference type="InterPro" id="IPR036264">
    <property type="entry name" value="Bact_exopeptidase_dim_dom"/>
</dbReference>
<dbReference type="InterPro" id="IPR002933">
    <property type="entry name" value="Peptidase_M20"/>
</dbReference>
<dbReference type="NCBIfam" id="TIGR01879">
    <property type="entry name" value="hydantase"/>
    <property type="match status" value="1"/>
</dbReference>
<dbReference type="NCBIfam" id="NF006771">
    <property type="entry name" value="PRK09290.1-5"/>
    <property type="match status" value="1"/>
</dbReference>
<dbReference type="PANTHER" id="PTHR32494:SF5">
    <property type="entry name" value="ALLANTOATE AMIDOHYDROLASE"/>
    <property type="match status" value="1"/>
</dbReference>
<dbReference type="PANTHER" id="PTHR32494">
    <property type="entry name" value="ALLANTOATE DEIMINASE-RELATED"/>
    <property type="match status" value="1"/>
</dbReference>
<dbReference type="Pfam" id="PF01546">
    <property type="entry name" value="Peptidase_M20"/>
    <property type="match status" value="1"/>
</dbReference>
<dbReference type="PIRSF" id="PIRSF001235">
    <property type="entry name" value="Amidase_carbamoylase"/>
    <property type="match status" value="1"/>
</dbReference>
<dbReference type="SUPFAM" id="SSF55031">
    <property type="entry name" value="Bacterial exopeptidase dimerisation domain"/>
    <property type="match status" value="1"/>
</dbReference>
<dbReference type="SUPFAM" id="SSF53187">
    <property type="entry name" value="Zn-dependent exopeptidases"/>
    <property type="match status" value="1"/>
</dbReference>
<evidence type="ECO:0000250" key="1">
    <source>
        <dbReference type="UniProtKB" id="Q53389"/>
    </source>
</evidence>
<evidence type="ECO:0000250" key="2">
    <source>
        <dbReference type="UniProtKB" id="Q6DTN4"/>
    </source>
</evidence>
<evidence type="ECO:0000269" key="3">
    <source>
    </source>
</evidence>
<evidence type="ECO:0000269" key="4">
    <source>
    </source>
</evidence>
<evidence type="ECO:0000303" key="5">
    <source>
    </source>
</evidence>
<evidence type="ECO:0000305" key="6"/>
<evidence type="ECO:0000305" key="7">
    <source>
    </source>
</evidence>
<accession>Q9F464</accession>
<feature type="chain" id="PRO_0000449272" description="N-carbamoyl-L-amino-acid amidohydrolase">
    <location>
        <begin position="1"/>
        <end position="412"/>
    </location>
</feature>
<feature type="region of interest" description="Involved in dimerization" evidence="1">
    <location>
        <begin position="212"/>
        <end position="330"/>
    </location>
</feature>
<feature type="binding site" evidence="2">
    <location>
        <position position="82"/>
    </location>
    <ligand>
        <name>a divalent metal cation</name>
        <dbReference type="ChEBI" id="CHEBI:60240"/>
        <label>1</label>
    </ligand>
</feature>
<feature type="binding site" evidence="2">
    <location>
        <position position="93"/>
    </location>
    <ligand>
        <name>a divalent metal cation</name>
        <dbReference type="ChEBI" id="CHEBI:60240"/>
        <label>1</label>
    </ligand>
</feature>
<feature type="binding site" evidence="2">
    <location>
        <position position="93"/>
    </location>
    <ligand>
        <name>a divalent metal cation</name>
        <dbReference type="ChEBI" id="CHEBI:60240"/>
        <label>2</label>
    </ligand>
</feature>
<feature type="binding site" evidence="2">
    <location>
        <position position="128"/>
    </location>
    <ligand>
        <name>a divalent metal cation</name>
        <dbReference type="ChEBI" id="CHEBI:60240"/>
        <label>2</label>
    </ligand>
</feature>
<feature type="binding site" evidence="2">
    <location>
        <position position="193"/>
    </location>
    <ligand>
        <name>a divalent metal cation</name>
        <dbReference type="ChEBI" id="CHEBI:60240"/>
        <label>1</label>
    </ligand>
</feature>
<feature type="binding site" evidence="2">
    <location>
        <position position="196"/>
    </location>
    <ligand>
        <name>an N-carbamoyl-L-alpha-amino acid</name>
        <dbReference type="ChEBI" id="CHEBI:58865"/>
    </ligand>
</feature>
<feature type="binding site" evidence="2">
    <location>
        <position position="229"/>
    </location>
    <ligand>
        <name>an N-carbamoyl-L-alpha-amino acid</name>
        <dbReference type="ChEBI" id="CHEBI:58865"/>
    </ligand>
</feature>
<feature type="binding site" evidence="2">
    <location>
        <position position="278"/>
    </location>
    <ligand>
        <name>an N-carbamoyl-L-alpha-amino acid</name>
        <dbReference type="ChEBI" id="CHEBI:58865"/>
    </ligand>
</feature>
<feature type="binding site" evidence="2">
    <location>
        <position position="291"/>
    </location>
    <ligand>
        <name>an N-carbamoyl-L-alpha-amino acid</name>
        <dbReference type="ChEBI" id="CHEBI:58865"/>
    </ligand>
</feature>
<feature type="binding site" evidence="2">
    <location>
        <position position="360"/>
    </location>
    <ligand>
        <name>an N-carbamoyl-L-alpha-amino acid</name>
        <dbReference type="ChEBI" id="CHEBI:58865"/>
    </ligand>
</feature>
<feature type="binding site" evidence="2">
    <location>
        <position position="385"/>
    </location>
    <ligand>
        <name>a divalent metal cation</name>
        <dbReference type="ChEBI" id="CHEBI:60240"/>
        <label>2</label>
    </ligand>
</feature>
<feature type="site" description="Necessary for dimerization" evidence="1">
    <location>
        <position position="238"/>
    </location>
</feature>
<proteinExistence type="evidence at protein level"/>
<keyword id="KW-0028">Amino-acid biosynthesis</keyword>
<keyword id="KW-0170">Cobalt</keyword>
<keyword id="KW-0378">Hydrolase</keyword>
<keyword id="KW-0408">Iron</keyword>
<keyword id="KW-0464">Manganese</keyword>
<keyword id="KW-0479">Metal-binding</keyword>
<keyword id="KW-0533">Nickel</keyword>
<gene>
    <name evidence="5" type="primary">hyuC</name>
</gene>
<organism>
    <name type="scientific">Paenarthrobacter aurescens</name>
    <name type="common">Arthrobacter aurescens</name>
    <dbReference type="NCBI Taxonomy" id="43663"/>
    <lineage>
        <taxon>Bacteria</taxon>
        <taxon>Bacillati</taxon>
        <taxon>Actinomycetota</taxon>
        <taxon>Actinomycetes</taxon>
        <taxon>Micrococcales</taxon>
        <taxon>Micrococcaceae</taxon>
        <taxon>Paenarthrobacter</taxon>
    </lineage>
</organism>
<protein>
    <recommendedName>
        <fullName evidence="7">N-carbamoyl-L-amino-acid amidohydrolase</fullName>
        <ecNumber evidence="3">3.5.1.87</ecNumber>
    </recommendedName>
    <alternativeName>
        <fullName evidence="5">L-N-carbamoylase</fullName>
    </alternativeName>
</protein>